<organism>
    <name type="scientific">Oryza sativa subsp. japonica</name>
    <name type="common">Rice</name>
    <dbReference type="NCBI Taxonomy" id="39947"/>
    <lineage>
        <taxon>Eukaryota</taxon>
        <taxon>Viridiplantae</taxon>
        <taxon>Streptophyta</taxon>
        <taxon>Embryophyta</taxon>
        <taxon>Tracheophyta</taxon>
        <taxon>Spermatophyta</taxon>
        <taxon>Magnoliopsida</taxon>
        <taxon>Liliopsida</taxon>
        <taxon>Poales</taxon>
        <taxon>Poaceae</taxon>
        <taxon>BOP clade</taxon>
        <taxon>Oryzoideae</taxon>
        <taxon>Oryzeae</taxon>
        <taxon>Oryzinae</taxon>
        <taxon>Oryza</taxon>
        <taxon>Oryza sativa</taxon>
    </lineage>
</organism>
<gene>
    <name type="ordered locus">Os02g0138900</name>
    <name type="ordered locus">LOC_Os02g04630</name>
    <name type="ORF">OSJNBa0026E05.30</name>
</gene>
<evidence type="ECO:0000250" key="1"/>
<evidence type="ECO:0000255" key="2"/>
<evidence type="ECO:0000256" key="3">
    <source>
        <dbReference type="SAM" id="MobiDB-lite"/>
    </source>
</evidence>
<evidence type="ECO:0000305" key="4"/>
<name>CAX4_ORYSJ</name>
<protein>
    <recommendedName>
        <fullName>Putative vacuolar cation/proton exchanger 4</fullName>
    </recommendedName>
    <alternativeName>
        <fullName>Ca(2+)/H(+) exchanger 4</fullName>
    </alternativeName>
    <alternativeName>
        <fullName>OsCAX4</fullName>
    </alternativeName>
</protein>
<proteinExistence type="inferred from homology"/>
<feature type="chain" id="PRO_0000209502" description="Putative vacuolar cation/proton exchanger 4">
    <location>
        <begin position="1"/>
        <end position="447"/>
    </location>
</feature>
<feature type="topological domain" description="Cytoplasmic" evidence="2">
    <location>
        <begin position="1"/>
        <end position="65"/>
    </location>
</feature>
<feature type="transmembrane region" description="Helical" evidence="2">
    <location>
        <begin position="66"/>
        <end position="86"/>
    </location>
</feature>
<feature type="topological domain" description="Extracellular" evidence="2">
    <location>
        <begin position="87"/>
        <end position="93"/>
    </location>
</feature>
<feature type="transmembrane region" description="Helical" evidence="2">
    <location>
        <begin position="94"/>
        <end position="114"/>
    </location>
</feature>
<feature type="topological domain" description="Cytoplasmic" evidence="2">
    <location>
        <begin position="115"/>
        <end position="122"/>
    </location>
</feature>
<feature type="transmembrane region" description="Helical" evidence="2">
    <location>
        <begin position="123"/>
        <end position="143"/>
    </location>
</feature>
<feature type="topological domain" description="Extracellular" evidence="2">
    <location>
        <begin position="144"/>
        <end position="159"/>
    </location>
</feature>
<feature type="transmembrane region" description="Helical" evidence="2">
    <location>
        <begin position="160"/>
        <end position="180"/>
    </location>
</feature>
<feature type="topological domain" description="Cytoplasmic" evidence="2">
    <location>
        <begin position="181"/>
        <end position="190"/>
    </location>
</feature>
<feature type="transmembrane region" description="Helical" evidence="2">
    <location>
        <begin position="191"/>
        <end position="211"/>
    </location>
</feature>
<feature type="topological domain" description="Extracellular" evidence="2">
    <location>
        <begin position="212"/>
        <end position="224"/>
    </location>
</feature>
<feature type="transmembrane region" description="Helical" evidence="2">
    <location>
        <begin position="225"/>
        <end position="245"/>
    </location>
</feature>
<feature type="topological domain" description="Cytoplasmic" evidence="2">
    <location>
        <begin position="246"/>
        <end position="286"/>
    </location>
</feature>
<feature type="transmembrane region" description="Helical" evidence="2">
    <location>
        <begin position="287"/>
        <end position="307"/>
    </location>
</feature>
<feature type="topological domain" description="Extracellular" evidence="2">
    <location>
        <begin position="308"/>
        <end position="318"/>
    </location>
</feature>
<feature type="transmembrane region" description="Helical" evidence="2">
    <location>
        <begin position="319"/>
        <end position="339"/>
    </location>
</feature>
<feature type="topological domain" description="Cytoplasmic" evidence="2">
    <location>
        <begin position="340"/>
        <end position="353"/>
    </location>
</feature>
<feature type="transmembrane region" description="Helical" evidence="2">
    <location>
        <begin position="354"/>
        <end position="374"/>
    </location>
</feature>
<feature type="topological domain" description="Extracellular" evidence="2">
    <location>
        <begin position="375"/>
        <end position="384"/>
    </location>
</feature>
<feature type="transmembrane region" description="Helical" evidence="2">
    <location>
        <begin position="385"/>
        <end position="405"/>
    </location>
</feature>
<feature type="topological domain" description="Cytoplasmic" evidence="2">
    <location>
        <begin position="406"/>
        <end position="413"/>
    </location>
</feature>
<feature type="transmembrane region" description="Helical" evidence="2">
    <location>
        <begin position="414"/>
        <end position="434"/>
    </location>
</feature>
<feature type="topological domain" description="Extracellular" evidence="2">
    <location>
        <begin position="435"/>
        <end position="447"/>
    </location>
</feature>
<feature type="region of interest" description="Disordered" evidence="3">
    <location>
        <begin position="1"/>
        <end position="29"/>
    </location>
</feature>
<feature type="region of interest" description="Cation selection" evidence="2">
    <location>
        <begin position="132"/>
        <end position="167"/>
    </location>
</feature>
<feature type="region of interest" description="Cation selection" evidence="2">
    <location>
        <begin position="333"/>
        <end position="368"/>
    </location>
</feature>
<feature type="compositionally biased region" description="Polar residues" evidence="3">
    <location>
        <begin position="10"/>
        <end position="22"/>
    </location>
</feature>
<accession>Q6YXZ1</accession>
<comment type="function">
    <text evidence="1">Vacuolar cation/proton exchanger (CAX). Translocates Ca(2+) and other metal ions into vacuoles using the proton gradient formed by H(+)-ATPase and H(+)-pyrophosphatase (By similarity).</text>
</comment>
<comment type="subcellular location">
    <subcellularLocation>
        <location evidence="4">Vacuole membrane</location>
        <topology evidence="4">Multi-pass membrane protein</topology>
    </subcellularLocation>
    <text>Tonoplast.</text>
</comment>
<comment type="similarity">
    <text evidence="4">Belongs to the Ca(2+):cation antiporter (CaCA) (TC 2.A.19) family. Cation/proton exchanger (CAX) subfamily.</text>
</comment>
<reference key="1">
    <citation type="journal article" date="2005" name="Nature">
        <title>The map-based sequence of the rice genome.</title>
        <authorList>
            <consortium name="International rice genome sequencing project (IRGSP)"/>
        </authorList>
    </citation>
    <scope>NUCLEOTIDE SEQUENCE [LARGE SCALE GENOMIC DNA]</scope>
    <source>
        <strain>cv. Nipponbare</strain>
    </source>
</reference>
<reference key="2">
    <citation type="journal article" date="2013" name="Rice">
        <title>Improvement of the Oryza sativa Nipponbare reference genome using next generation sequence and optical map data.</title>
        <authorList>
            <person name="Kawahara Y."/>
            <person name="de la Bastide M."/>
            <person name="Hamilton J.P."/>
            <person name="Kanamori H."/>
            <person name="McCombie W.R."/>
            <person name="Ouyang S."/>
            <person name="Schwartz D.C."/>
            <person name="Tanaka T."/>
            <person name="Wu J."/>
            <person name="Zhou S."/>
            <person name="Childs K.L."/>
            <person name="Davidson R.M."/>
            <person name="Lin H."/>
            <person name="Quesada-Ocampo L."/>
            <person name="Vaillancourt B."/>
            <person name="Sakai H."/>
            <person name="Lee S.S."/>
            <person name="Kim J."/>
            <person name="Numa H."/>
            <person name="Itoh T."/>
            <person name="Buell C.R."/>
            <person name="Matsumoto T."/>
        </authorList>
    </citation>
    <scope>GENOME REANNOTATION</scope>
    <source>
        <strain>cv. Nipponbare</strain>
    </source>
</reference>
<keyword id="KW-0050">Antiport</keyword>
<keyword id="KW-0106">Calcium</keyword>
<keyword id="KW-0109">Calcium transport</keyword>
<keyword id="KW-0406">Ion transport</keyword>
<keyword id="KW-0472">Membrane</keyword>
<keyword id="KW-1185">Reference proteome</keyword>
<keyword id="KW-0812">Transmembrane</keyword>
<keyword id="KW-1133">Transmembrane helix</keyword>
<keyword id="KW-0813">Transport</keyword>
<keyword id="KW-0926">Vacuole</keyword>
<sequence length="447" mass="48768">MDKSEMDKINGTNPESTDQAPSLASRPDEFEEEESLVTPDALSARIGGFQIYAGSVNWGVFGSMKIVFLKSKLNVLIPCGFLAIFLNYMTQRYGWVFPLSMLGIIPLAERLGFATDWQISCEVGRLLNSAFGNATELIISIHALSRGKLHVVQQCLLGSILSNLLLVLGSAFFSGGLACGKTMQTFSKADAVVNSGLLLMAVMGLLIPAALHYTHSEAQFGKSELALSRFSSCIMLVAYASYLYFQLSNNRRRNEANVYPCMPLIKRRIQDDVDGNDDEVPEISKREAISWIAIFIAWISMLSYYLVDAIDGASKAWNIPVAFISVVLLPVVGNSAGHANAVMFAVKDKLDISLGVAIGSSIQISMFGIPFCVVMGWMMGKPMDLNFHLFETASLLTTVLVVAFLLQDGTSNCVKGLMLFLCYLIVAASFYVHADPNSKASEKPPQN</sequence>
<dbReference type="EMBL" id="AP005647">
    <property type="protein sequence ID" value="BAD10539.1"/>
    <property type="molecule type" value="Genomic_DNA"/>
</dbReference>
<dbReference type="EMBL" id="AP014958">
    <property type="status" value="NOT_ANNOTATED_CDS"/>
    <property type="molecule type" value="Genomic_DNA"/>
</dbReference>
<dbReference type="SMR" id="Q6YXZ1"/>
<dbReference type="FunCoup" id="Q6YXZ1">
    <property type="interactions" value="4"/>
</dbReference>
<dbReference type="STRING" id="39947.Q6YXZ1"/>
<dbReference type="PaxDb" id="39947-Q6YXZ1"/>
<dbReference type="eggNOG" id="KOG1397">
    <property type="taxonomic scope" value="Eukaryota"/>
</dbReference>
<dbReference type="HOGENOM" id="CLU_008721_2_2_1"/>
<dbReference type="InParanoid" id="Q6YXZ1"/>
<dbReference type="Proteomes" id="UP000000763">
    <property type="component" value="Chromosome 2"/>
</dbReference>
<dbReference type="Proteomes" id="UP000059680">
    <property type="component" value="Chromosome 2"/>
</dbReference>
<dbReference type="GO" id="GO:0009705">
    <property type="term" value="C:plant-type vacuole membrane"/>
    <property type="evidence" value="ECO:0000318"/>
    <property type="project" value="GO_Central"/>
</dbReference>
<dbReference type="GO" id="GO:0015369">
    <property type="term" value="F:calcium:proton antiporter activity"/>
    <property type="evidence" value="ECO:0000318"/>
    <property type="project" value="GO_Central"/>
</dbReference>
<dbReference type="GO" id="GO:0070588">
    <property type="term" value="P:calcium ion transmembrane transport"/>
    <property type="evidence" value="ECO:0000318"/>
    <property type="project" value="GO_Central"/>
</dbReference>
<dbReference type="GO" id="GO:0006874">
    <property type="term" value="P:intracellular calcium ion homeostasis"/>
    <property type="evidence" value="ECO:0000318"/>
    <property type="project" value="GO_Central"/>
</dbReference>
<dbReference type="FunFam" id="1.20.1420.30:FF:000008">
    <property type="entry name" value="Vacuolar cation/proton exchanger"/>
    <property type="match status" value="1"/>
</dbReference>
<dbReference type="FunFam" id="1.20.1420.30:FF:000012">
    <property type="entry name" value="Vacuolar cation/proton exchanger"/>
    <property type="match status" value="1"/>
</dbReference>
<dbReference type="Gene3D" id="1.20.1420.30">
    <property type="entry name" value="NCX, central ion-binding region"/>
    <property type="match status" value="2"/>
</dbReference>
<dbReference type="InterPro" id="IPR004713">
    <property type="entry name" value="CaH_exchang"/>
</dbReference>
<dbReference type="InterPro" id="IPR004798">
    <property type="entry name" value="CAX-like"/>
</dbReference>
<dbReference type="InterPro" id="IPR004837">
    <property type="entry name" value="NaCa_Exmemb"/>
</dbReference>
<dbReference type="InterPro" id="IPR044880">
    <property type="entry name" value="NCX_ion-bd_dom_sf"/>
</dbReference>
<dbReference type="NCBIfam" id="TIGR00846">
    <property type="entry name" value="caca2"/>
    <property type="match status" value="1"/>
</dbReference>
<dbReference type="NCBIfam" id="TIGR00378">
    <property type="entry name" value="cax"/>
    <property type="match status" value="1"/>
</dbReference>
<dbReference type="PANTHER" id="PTHR31503">
    <property type="entry name" value="VACUOLAR CALCIUM ION TRANSPORTER"/>
    <property type="match status" value="1"/>
</dbReference>
<dbReference type="PANTHER" id="PTHR31503:SF48">
    <property type="entry name" value="VACUOLAR CATION_PROTON EXCHANGER 2"/>
    <property type="match status" value="1"/>
</dbReference>
<dbReference type="Pfam" id="PF01699">
    <property type="entry name" value="Na_Ca_ex"/>
    <property type="match status" value="2"/>
</dbReference>